<dbReference type="EC" id="5.3.1.1" evidence="1"/>
<dbReference type="EMBL" id="AM884176">
    <property type="protein sequence ID" value="CAP04021.1"/>
    <property type="molecule type" value="Genomic_DNA"/>
</dbReference>
<dbReference type="RefSeq" id="WP_009873730.1">
    <property type="nucleotide sequence ID" value="NC_010287.1"/>
</dbReference>
<dbReference type="RefSeq" id="YP_001654656.1">
    <property type="nucleotide sequence ID" value="NC_010287.1"/>
</dbReference>
<dbReference type="SMR" id="B0B7P5"/>
<dbReference type="KEGG" id="ctb:CTL0582"/>
<dbReference type="PATRIC" id="fig|471472.4.peg.626"/>
<dbReference type="HOGENOM" id="CLU_024251_2_1_0"/>
<dbReference type="UniPathway" id="UPA00109">
    <property type="reaction ID" value="UER00189"/>
</dbReference>
<dbReference type="UniPathway" id="UPA00138"/>
<dbReference type="Proteomes" id="UP001154402">
    <property type="component" value="Chromosome"/>
</dbReference>
<dbReference type="GO" id="GO:0005829">
    <property type="term" value="C:cytosol"/>
    <property type="evidence" value="ECO:0007669"/>
    <property type="project" value="TreeGrafter"/>
</dbReference>
<dbReference type="GO" id="GO:0004807">
    <property type="term" value="F:triose-phosphate isomerase activity"/>
    <property type="evidence" value="ECO:0007669"/>
    <property type="project" value="UniProtKB-UniRule"/>
</dbReference>
<dbReference type="GO" id="GO:0006094">
    <property type="term" value="P:gluconeogenesis"/>
    <property type="evidence" value="ECO:0007669"/>
    <property type="project" value="UniProtKB-UniRule"/>
</dbReference>
<dbReference type="GO" id="GO:0046166">
    <property type="term" value="P:glyceraldehyde-3-phosphate biosynthetic process"/>
    <property type="evidence" value="ECO:0007669"/>
    <property type="project" value="TreeGrafter"/>
</dbReference>
<dbReference type="GO" id="GO:0019563">
    <property type="term" value="P:glycerol catabolic process"/>
    <property type="evidence" value="ECO:0007669"/>
    <property type="project" value="TreeGrafter"/>
</dbReference>
<dbReference type="GO" id="GO:0006096">
    <property type="term" value="P:glycolytic process"/>
    <property type="evidence" value="ECO:0007669"/>
    <property type="project" value="UniProtKB-UniRule"/>
</dbReference>
<dbReference type="CDD" id="cd00311">
    <property type="entry name" value="TIM"/>
    <property type="match status" value="1"/>
</dbReference>
<dbReference type="FunFam" id="3.20.20.70:FF:000016">
    <property type="entry name" value="Triosephosphate isomerase"/>
    <property type="match status" value="1"/>
</dbReference>
<dbReference type="Gene3D" id="3.20.20.70">
    <property type="entry name" value="Aldolase class I"/>
    <property type="match status" value="1"/>
</dbReference>
<dbReference type="HAMAP" id="MF_00147_B">
    <property type="entry name" value="TIM_B"/>
    <property type="match status" value="1"/>
</dbReference>
<dbReference type="InterPro" id="IPR013785">
    <property type="entry name" value="Aldolase_TIM"/>
</dbReference>
<dbReference type="InterPro" id="IPR035990">
    <property type="entry name" value="TIM_sf"/>
</dbReference>
<dbReference type="InterPro" id="IPR022896">
    <property type="entry name" value="TrioseP_Isoase_bac/euk"/>
</dbReference>
<dbReference type="InterPro" id="IPR000652">
    <property type="entry name" value="Triosephosphate_isomerase"/>
</dbReference>
<dbReference type="InterPro" id="IPR020861">
    <property type="entry name" value="Triosephosphate_isomerase_AS"/>
</dbReference>
<dbReference type="NCBIfam" id="TIGR00419">
    <property type="entry name" value="tim"/>
    <property type="match status" value="1"/>
</dbReference>
<dbReference type="PANTHER" id="PTHR21139">
    <property type="entry name" value="TRIOSEPHOSPHATE ISOMERASE"/>
    <property type="match status" value="1"/>
</dbReference>
<dbReference type="PANTHER" id="PTHR21139:SF42">
    <property type="entry name" value="TRIOSEPHOSPHATE ISOMERASE"/>
    <property type="match status" value="1"/>
</dbReference>
<dbReference type="Pfam" id="PF00121">
    <property type="entry name" value="TIM"/>
    <property type="match status" value="1"/>
</dbReference>
<dbReference type="SUPFAM" id="SSF51351">
    <property type="entry name" value="Triosephosphate isomerase (TIM)"/>
    <property type="match status" value="1"/>
</dbReference>
<dbReference type="PROSITE" id="PS00171">
    <property type="entry name" value="TIM_1"/>
    <property type="match status" value="1"/>
</dbReference>
<dbReference type="PROSITE" id="PS51440">
    <property type="entry name" value="TIM_2"/>
    <property type="match status" value="1"/>
</dbReference>
<accession>B0B7P5</accession>
<evidence type="ECO:0000255" key="1">
    <source>
        <dbReference type="HAMAP-Rule" id="MF_00147"/>
    </source>
</evidence>
<proteinExistence type="inferred from homology"/>
<reference key="1">
    <citation type="journal article" date="2008" name="Genome Res.">
        <title>Chlamydia trachomatis: genome sequence analysis of lymphogranuloma venereum isolates.</title>
        <authorList>
            <person name="Thomson N.R."/>
            <person name="Holden M.T.G."/>
            <person name="Carder C."/>
            <person name="Lennard N."/>
            <person name="Lockey S.J."/>
            <person name="Marsh P."/>
            <person name="Skipp P."/>
            <person name="O'Connor C.D."/>
            <person name="Goodhead I."/>
            <person name="Norbertzcak H."/>
            <person name="Harris B."/>
            <person name="Ormond D."/>
            <person name="Rance R."/>
            <person name="Quail M.A."/>
            <person name="Parkhill J."/>
            <person name="Stephens R.S."/>
            <person name="Clarke I.N."/>
        </authorList>
    </citation>
    <scope>NUCLEOTIDE SEQUENCE [LARGE SCALE GENOMIC DNA]</scope>
    <source>
        <strain>ATCC VR-902B / DSM 19102 / 434/Bu</strain>
    </source>
</reference>
<keyword id="KW-0963">Cytoplasm</keyword>
<keyword id="KW-0312">Gluconeogenesis</keyword>
<keyword id="KW-0324">Glycolysis</keyword>
<keyword id="KW-0413">Isomerase</keyword>
<protein>
    <recommendedName>
        <fullName evidence="1">Triosephosphate isomerase</fullName>
        <shortName evidence="1">TIM</shortName>
        <shortName evidence="1">TPI</shortName>
        <ecNumber evidence="1">5.3.1.1</ecNumber>
    </recommendedName>
    <alternativeName>
        <fullName evidence="1">Triose-phosphate isomerase</fullName>
    </alternativeName>
</protein>
<organism>
    <name type="scientific">Chlamydia trachomatis serovar L2 (strain ATCC VR-902B / DSM 19102 / 434/Bu)</name>
    <dbReference type="NCBI Taxonomy" id="471472"/>
    <lineage>
        <taxon>Bacteria</taxon>
        <taxon>Pseudomonadati</taxon>
        <taxon>Chlamydiota</taxon>
        <taxon>Chlamydiia</taxon>
        <taxon>Chlamydiales</taxon>
        <taxon>Chlamydiaceae</taxon>
        <taxon>Chlamydia/Chlamydophila group</taxon>
        <taxon>Chlamydia</taxon>
    </lineage>
</organism>
<feature type="chain" id="PRO_1000096483" description="Triosephosphate isomerase">
    <location>
        <begin position="1"/>
        <end position="274"/>
    </location>
</feature>
<feature type="active site" description="Electrophile" evidence="1">
    <location>
        <position position="118"/>
    </location>
</feature>
<feature type="active site" description="Proton acceptor" evidence="1">
    <location>
        <position position="188"/>
    </location>
</feature>
<feature type="binding site" evidence="1">
    <location>
        <begin position="31"/>
        <end position="33"/>
    </location>
    <ligand>
        <name>substrate</name>
    </ligand>
</feature>
<feature type="binding site" evidence="1">
    <location>
        <position position="194"/>
    </location>
    <ligand>
        <name>substrate</name>
    </ligand>
</feature>
<feature type="binding site" evidence="1">
    <location>
        <position position="234"/>
    </location>
    <ligand>
        <name>substrate</name>
    </ligand>
</feature>
<feature type="binding site" evidence="1">
    <location>
        <begin position="255"/>
        <end position="256"/>
    </location>
    <ligand>
        <name>substrate</name>
    </ligand>
</feature>
<name>TPIS_CHLT2</name>
<sequence>MFTDKETHRKPFPTWAHLLHSEPSKQFVFGNWKMNKTLTEAQTFLKSFLSSDILSNPQIITGIIPPFTLLSACQQAVSDSPIFLGAQTTHEADSGAFTGEISAPMLKDIGVDFVLIGHSERRHIFHEQNPVLAEKAAAAIHSGMIPVLCIGETLEEQESGATQDILLNQLTIGLSKLPEQASFILAYEPVWAIGTGKVAHPDLVQETHAFCRKTIASLFSKDIAERTPILYGGSVKADNARSLSLCPDVNGLLVGGASLSSENFLSIIQQIDIP</sequence>
<gene>
    <name evidence="1" type="primary">tpiA</name>
    <name type="ordered locus">CTL0582</name>
</gene>
<comment type="function">
    <text evidence="1">Involved in the gluconeogenesis. Catalyzes stereospecifically the conversion of dihydroxyacetone phosphate (DHAP) to D-glyceraldehyde-3-phosphate (G3P).</text>
</comment>
<comment type="catalytic activity">
    <reaction evidence="1">
        <text>D-glyceraldehyde 3-phosphate = dihydroxyacetone phosphate</text>
        <dbReference type="Rhea" id="RHEA:18585"/>
        <dbReference type="ChEBI" id="CHEBI:57642"/>
        <dbReference type="ChEBI" id="CHEBI:59776"/>
        <dbReference type="EC" id="5.3.1.1"/>
    </reaction>
</comment>
<comment type="pathway">
    <text evidence="1">Carbohydrate biosynthesis; gluconeogenesis.</text>
</comment>
<comment type="pathway">
    <text evidence="1">Carbohydrate degradation; glycolysis; D-glyceraldehyde 3-phosphate from glycerone phosphate: step 1/1.</text>
</comment>
<comment type="subunit">
    <text evidence="1">Homodimer.</text>
</comment>
<comment type="subcellular location">
    <subcellularLocation>
        <location evidence="1">Cytoplasm</location>
    </subcellularLocation>
</comment>
<comment type="similarity">
    <text evidence="1">Belongs to the triosephosphate isomerase family.</text>
</comment>